<organism>
    <name type="scientific">Pseudomonas aeruginosa (strain ATCC 15692 / DSM 22644 / CIP 104116 / JCM 14847 / LMG 12228 / 1C / PRS 101 / PAO1)</name>
    <dbReference type="NCBI Taxonomy" id="208964"/>
    <lineage>
        <taxon>Bacteria</taxon>
        <taxon>Pseudomonadati</taxon>
        <taxon>Pseudomonadota</taxon>
        <taxon>Gammaproteobacteria</taxon>
        <taxon>Pseudomonadales</taxon>
        <taxon>Pseudomonadaceae</taxon>
        <taxon>Pseudomonas</taxon>
    </lineage>
</organism>
<name>MRAY_PSEAE</name>
<comment type="function">
    <text evidence="1">Catalyzes the initial step of the lipid cycle reactions in the biosynthesis of the cell wall peptidoglycan: transfers peptidoglycan precursor phospho-MurNAc-pentapeptide from UDP-MurNAc-pentapeptide onto the lipid carrier undecaprenyl phosphate, yielding undecaprenyl-pyrophosphoryl-MurNAc-pentapeptide, known as lipid I.</text>
</comment>
<comment type="catalytic activity">
    <reaction evidence="1">
        <text>UDP-N-acetyl-alpha-D-muramoyl-L-alanyl-gamma-D-glutamyl-meso-2,6-diaminopimeloyl-D-alanyl-D-alanine + di-trans,octa-cis-undecaprenyl phosphate = di-trans,octa-cis-undecaprenyl diphospho-N-acetyl-alpha-D-muramoyl-L-alanyl-D-glutamyl-meso-2,6-diaminopimeloyl-D-alanyl-D-alanine + UMP</text>
        <dbReference type="Rhea" id="RHEA:28386"/>
        <dbReference type="ChEBI" id="CHEBI:57865"/>
        <dbReference type="ChEBI" id="CHEBI:60392"/>
        <dbReference type="ChEBI" id="CHEBI:61386"/>
        <dbReference type="ChEBI" id="CHEBI:61387"/>
        <dbReference type="EC" id="2.7.8.13"/>
    </reaction>
</comment>
<comment type="cofactor">
    <cofactor evidence="1">
        <name>Mg(2+)</name>
        <dbReference type="ChEBI" id="CHEBI:18420"/>
    </cofactor>
</comment>
<comment type="pathway">
    <text evidence="1">Cell wall biogenesis; peptidoglycan biosynthesis.</text>
</comment>
<comment type="subcellular location">
    <subcellularLocation>
        <location evidence="1">Cell inner membrane</location>
        <topology evidence="1">Multi-pass membrane protein</topology>
    </subcellularLocation>
</comment>
<comment type="similarity">
    <text evidence="1">Belongs to the glycosyltransferase 4 family. MraY subfamily.</text>
</comment>
<accession>Q9HVZ8</accession>
<accession>Q9EY47</accession>
<protein>
    <recommendedName>
        <fullName evidence="1">Phospho-N-acetylmuramoyl-pentapeptide-transferase</fullName>
        <ecNumber evidence="1">2.7.8.13</ecNumber>
    </recommendedName>
    <alternativeName>
        <fullName evidence="1">UDP-MurNAc-pentapeptide phosphotransferase</fullName>
    </alternativeName>
</protein>
<proteinExistence type="inferred from homology"/>
<feature type="chain" id="PRO_0000108871" description="Phospho-N-acetylmuramoyl-pentapeptide-transferase">
    <location>
        <begin position="1"/>
        <end position="360"/>
    </location>
</feature>
<feature type="transmembrane region" description="Helical" evidence="1">
    <location>
        <begin position="25"/>
        <end position="45"/>
    </location>
</feature>
<feature type="transmembrane region" description="Helical" evidence="1">
    <location>
        <begin position="73"/>
        <end position="93"/>
    </location>
</feature>
<feature type="transmembrane region" description="Helical" evidence="1">
    <location>
        <begin position="97"/>
        <end position="117"/>
    </location>
</feature>
<feature type="transmembrane region" description="Helical" evidence="1">
    <location>
        <begin position="142"/>
        <end position="162"/>
    </location>
</feature>
<feature type="transmembrane region" description="Helical" evidence="1">
    <location>
        <begin position="167"/>
        <end position="187"/>
    </location>
</feature>
<feature type="transmembrane region" description="Helical" evidence="1">
    <location>
        <begin position="199"/>
        <end position="219"/>
    </location>
</feature>
<feature type="transmembrane region" description="Helical" evidence="1">
    <location>
        <begin position="236"/>
        <end position="256"/>
    </location>
</feature>
<feature type="transmembrane region" description="Helical" evidence="1">
    <location>
        <begin position="263"/>
        <end position="283"/>
    </location>
</feature>
<feature type="transmembrane region" description="Helical" evidence="1">
    <location>
        <begin position="288"/>
        <end position="308"/>
    </location>
</feature>
<feature type="transmembrane region" description="Helical" evidence="1">
    <location>
        <begin position="338"/>
        <end position="358"/>
    </location>
</feature>
<feature type="sequence conflict" description="In Ref. 1; AAG22121." evidence="2" ref="1">
    <original>R</original>
    <variation>P</variation>
    <location>
        <position position="51"/>
    </location>
</feature>
<feature type="sequence conflict" description="In Ref. 1; AAG22121." evidence="2" ref="1">
    <original>E</original>
    <variation>D</variation>
    <location>
        <position position="335"/>
    </location>
</feature>
<evidence type="ECO:0000255" key="1">
    <source>
        <dbReference type="HAMAP-Rule" id="MF_00038"/>
    </source>
</evidence>
<evidence type="ECO:0000305" key="2"/>
<dbReference type="EC" id="2.7.8.13" evidence="1"/>
<dbReference type="EMBL" id="AY008276">
    <property type="protein sequence ID" value="AAG22121.1"/>
    <property type="molecule type" value="Genomic_DNA"/>
</dbReference>
<dbReference type="EMBL" id="AE004091">
    <property type="protein sequence ID" value="AAG07803.1"/>
    <property type="molecule type" value="Genomic_DNA"/>
</dbReference>
<dbReference type="PIR" id="H83094">
    <property type="entry name" value="H83094"/>
</dbReference>
<dbReference type="RefSeq" id="NP_253105.1">
    <property type="nucleotide sequence ID" value="NC_002516.2"/>
</dbReference>
<dbReference type="RefSeq" id="WP_003094129.1">
    <property type="nucleotide sequence ID" value="NZ_QZGE01000004.1"/>
</dbReference>
<dbReference type="SMR" id="Q9HVZ8"/>
<dbReference type="FunCoup" id="Q9HVZ8">
    <property type="interactions" value="501"/>
</dbReference>
<dbReference type="STRING" id="208964.PA4415"/>
<dbReference type="PaxDb" id="208964-PA4415"/>
<dbReference type="DNASU" id="881288"/>
<dbReference type="GeneID" id="881288"/>
<dbReference type="KEGG" id="pae:PA4415"/>
<dbReference type="PATRIC" id="fig|208964.12.peg.4624"/>
<dbReference type="PseudoCAP" id="PA4415"/>
<dbReference type="HOGENOM" id="CLU_023982_0_0_6"/>
<dbReference type="InParanoid" id="Q9HVZ8"/>
<dbReference type="OrthoDB" id="9805475at2"/>
<dbReference type="PhylomeDB" id="Q9HVZ8"/>
<dbReference type="BioCyc" id="PAER208964:G1FZ6-4502-MONOMER"/>
<dbReference type="UniPathway" id="UPA00219"/>
<dbReference type="Proteomes" id="UP000002438">
    <property type="component" value="Chromosome"/>
</dbReference>
<dbReference type="GO" id="GO:0005886">
    <property type="term" value="C:plasma membrane"/>
    <property type="evidence" value="ECO:0000318"/>
    <property type="project" value="GO_Central"/>
</dbReference>
<dbReference type="GO" id="GO:0046872">
    <property type="term" value="F:metal ion binding"/>
    <property type="evidence" value="ECO:0007669"/>
    <property type="project" value="UniProtKB-KW"/>
</dbReference>
<dbReference type="GO" id="GO:0008963">
    <property type="term" value="F:phospho-N-acetylmuramoyl-pentapeptide-transferase activity"/>
    <property type="evidence" value="ECO:0000318"/>
    <property type="project" value="GO_Central"/>
</dbReference>
<dbReference type="GO" id="GO:0051992">
    <property type="term" value="F:UDP-N-acetylmuramoyl-L-alanyl-D-glutamyl-meso-2,6-diaminopimelyl-D-alanyl-D-alanine:undecaprenyl-phosphate transferase activity"/>
    <property type="evidence" value="ECO:0007669"/>
    <property type="project" value="RHEA"/>
</dbReference>
<dbReference type="GO" id="GO:0051301">
    <property type="term" value="P:cell division"/>
    <property type="evidence" value="ECO:0007669"/>
    <property type="project" value="UniProtKB-KW"/>
</dbReference>
<dbReference type="GO" id="GO:0044038">
    <property type="term" value="P:cell wall macromolecule biosynthetic process"/>
    <property type="evidence" value="ECO:0000318"/>
    <property type="project" value="GO_Central"/>
</dbReference>
<dbReference type="GO" id="GO:0071555">
    <property type="term" value="P:cell wall organization"/>
    <property type="evidence" value="ECO:0000318"/>
    <property type="project" value="GO_Central"/>
</dbReference>
<dbReference type="GO" id="GO:0009252">
    <property type="term" value="P:peptidoglycan biosynthetic process"/>
    <property type="evidence" value="ECO:0007669"/>
    <property type="project" value="UniProtKB-UniRule"/>
</dbReference>
<dbReference type="GO" id="GO:0008360">
    <property type="term" value="P:regulation of cell shape"/>
    <property type="evidence" value="ECO:0007669"/>
    <property type="project" value="UniProtKB-KW"/>
</dbReference>
<dbReference type="CDD" id="cd06852">
    <property type="entry name" value="GT_MraY"/>
    <property type="match status" value="1"/>
</dbReference>
<dbReference type="HAMAP" id="MF_00038">
    <property type="entry name" value="MraY"/>
    <property type="match status" value="1"/>
</dbReference>
<dbReference type="InterPro" id="IPR000715">
    <property type="entry name" value="Glycosyl_transferase_4"/>
</dbReference>
<dbReference type="InterPro" id="IPR003524">
    <property type="entry name" value="PNAcMuramoyl-5peptid_Trfase"/>
</dbReference>
<dbReference type="InterPro" id="IPR018480">
    <property type="entry name" value="PNAcMuramoyl-5peptid_Trfase_CS"/>
</dbReference>
<dbReference type="NCBIfam" id="TIGR00445">
    <property type="entry name" value="mraY"/>
    <property type="match status" value="1"/>
</dbReference>
<dbReference type="PANTHER" id="PTHR22926">
    <property type="entry name" value="PHOSPHO-N-ACETYLMURAMOYL-PENTAPEPTIDE-TRANSFERASE"/>
    <property type="match status" value="1"/>
</dbReference>
<dbReference type="PANTHER" id="PTHR22926:SF5">
    <property type="entry name" value="PHOSPHO-N-ACETYLMURAMOYL-PENTAPEPTIDE-TRANSFERASE HOMOLOG"/>
    <property type="match status" value="1"/>
</dbReference>
<dbReference type="Pfam" id="PF00953">
    <property type="entry name" value="Glycos_transf_4"/>
    <property type="match status" value="1"/>
</dbReference>
<dbReference type="PROSITE" id="PS01347">
    <property type="entry name" value="MRAY_1"/>
    <property type="match status" value="1"/>
</dbReference>
<dbReference type="PROSITE" id="PS01348">
    <property type="entry name" value="MRAY_2"/>
    <property type="match status" value="1"/>
</dbReference>
<sequence>MLLLLAEYLQQFYKGFGVFQYLTLRGILSVLTALSLSLWLGPWMIRTLQIRQIGQAVRNDGPQSHLSKKGTPTMGGALILTAIAISTLLWADLSNRYVWVVLVVTLLFGAIGWVDDYRKVIEKNSRGLPSRWKYFWQSVFGIGAAVFLYMTAETPIETTLIVPMLKSVEIQLGIFFVVLTYFVIVGSSNAVNLTDGLDGLAIMPTVMVAGALGIFCYLSGNVKFAEYLLIPNVPGAGELIVFCAALVGAGLGFLWFNTYPAQVFMGDVGALALGAALGTIAVIVRQEIVLFIMGGVFVMETLSVMIQVASFKLTGRRVFRMAPIHHHFELKGWPEPRVIVRFWIITVILVLIGLATLKLR</sequence>
<gene>
    <name evidence="1" type="primary">mraY</name>
    <name type="ordered locus">PA4415</name>
</gene>
<keyword id="KW-0131">Cell cycle</keyword>
<keyword id="KW-0132">Cell division</keyword>
<keyword id="KW-0997">Cell inner membrane</keyword>
<keyword id="KW-1003">Cell membrane</keyword>
<keyword id="KW-0133">Cell shape</keyword>
<keyword id="KW-0961">Cell wall biogenesis/degradation</keyword>
<keyword id="KW-0460">Magnesium</keyword>
<keyword id="KW-0472">Membrane</keyword>
<keyword id="KW-0479">Metal-binding</keyword>
<keyword id="KW-0573">Peptidoglycan synthesis</keyword>
<keyword id="KW-1185">Reference proteome</keyword>
<keyword id="KW-0808">Transferase</keyword>
<keyword id="KW-0812">Transmembrane</keyword>
<keyword id="KW-1133">Transmembrane helix</keyword>
<reference key="1">
    <citation type="journal article" date="2001" name="Protein Expr. Purif.">
        <title>The cell wall and cell division gene cluster in the Mra operon of Pseudomonas aeruginosa: cloning, production, and purification of active enzymes.</title>
        <authorList>
            <person name="Azzolina B.A."/>
            <person name="Yuan X."/>
            <person name="Anderson M.S."/>
            <person name="El-Sherbeini M."/>
        </authorList>
    </citation>
    <scope>NUCLEOTIDE SEQUENCE [GENOMIC DNA]</scope>
</reference>
<reference key="2">
    <citation type="journal article" date="2000" name="Nature">
        <title>Complete genome sequence of Pseudomonas aeruginosa PAO1, an opportunistic pathogen.</title>
        <authorList>
            <person name="Stover C.K."/>
            <person name="Pham X.-Q.T."/>
            <person name="Erwin A.L."/>
            <person name="Mizoguchi S.D."/>
            <person name="Warrener P."/>
            <person name="Hickey M.J."/>
            <person name="Brinkman F.S.L."/>
            <person name="Hufnagle W.O."/>
            <person name="Kowalik D.J."/>
            <person name="Lagrou M."/>
            <person name="Garber R.L."/>
            <person name="Goltry L."/>
            <person name="Tolentino E."/>
            <person name="Westbrock-Wadman S."/>
            <person name="Yuan Y."/>
            <person name="Brody L.L."/>
            <person name="Coulter S.N."/>
            <person name="Folger K.R."/>
            <person name="Kas A."/>
            <person name="Larbig K."/>
            <person name="Lim R.M."/>
            <person name="Smith K.A."/>
            <person name="Spencer D.H."/>
            <person name="Wong G.K.-S."/>
            <person name="Wu Z."/>
            <person name="Paulsen I.T."/>
            <person name="Reizer J."/>
            <person name="Saier M.H. Jr."/>
            <person name="Hancock R.E.W."/>
            <person name="Lory S."/>
            <person name="Olson M.V."/>
        </authorList>
    </citation>
    <scope>NUCLEOTIDE SEQUENCE [LARGE SCALE GENOMIC DNA]</scope>
    <source>
        <strain>ATCC 15692 / DSM 22644 / CIP 104116 / JCM 14847 / LMG 12228 / 1C / PRS 101 / PAO1</strain>
    </source>
</reference>